<gene>
    <name evidence="8" type="primary">Il11ra1</name>
</gene>
<keyword id="KW-1015">Disulfide bond</keyword>
<keyword id="KW-0325">Glycoprotein</keyword>
<keyword id="KW-0393">Immunoglobulin domain</keyword>
<keyword id="KW-0472">Membrane</keyword>
<keyword id="KW-0675">Receptor</keyword>
<keyword id="KW-1185">Reference proteome</keyword>
<keyword id="KW-0677">Repeat</keyword>
<keyword id="KW-0964">Secreted</keyword>
<keyword id="KW-0732">Signal</keyword>
<keyword id="KW-0812">Transmembrane</keyword>
<keyword id="KW-1133">Transmembrane helix</keyword>
<name>I11RA_RAT</name>
<sequence>MSSSRSGLTRVLVAVATALVSSSTPCPQAWGPPGVQYGQPGRPVMLCCPGVNAGTPVSWFRDGDSRLLQGPDSGLGHRLVLAQVDSRDEGTYVCRTLDGVFGGMVTLKLGSPPARPEVSCQAVDYENFSCTWSPGRVSGLPTRYLTSYRKKTLPGAESQRESPSTGPWPCPQDPLEASRCVVHGAEFWSEYRINVTEVNPLGASTCLLDVRLQRILRPDPPQGLRVESVPGYPRRLHASWTYPASWRRQPHFLLKFRLQYRPAQHPAWSTVEPIGLEELITDAVAGLPHAVRVSARDFLDAGTWSAWSPEAWGTPSTGPLRDEVPDGSRGHEQKLEAAAQEDSPAPPSPSLQPDPRPLDHRDPLEQVAVLASLGIFSFLGLAVGALALGLWLRLRRSGKDGPQKPGFLAPMIPGDKLPGIPNLQRTPENFS</sequence>
<proteinExistence type="evidence at transcript level"/>
<reference key="1">
    <citation type="submission" date="2001-02" db="EMBL/GenBank/DDBJ databases">
        <title>Expression of interleukin-11 and interleukin-11 receptor alpha chain in the rat uterus in the peri-implantation period.</title>
        <authorList>
            <person name="Li R."/>
            <person name="Hartley L."/>
            <person name="Robb L."/>
        </authorList>
    </citation>
    <scope>NUCLEOTIDE SEQUENCE [MRNA]</scope>
    <source>
        <strain>Sprague-Dawley</strain>
    </source>
</reference>
<reference key="2">
    <citation type="journal article" date="2004" name="Genome Res.">
        <title>The status, quality, and expansion of the NIH full-length cDNA project: the Mammalian Gene Collection (MGC).</title>
        <authorList>
            <consortium name="The MGC Project Team"/>
        </authorList>
    </citation>
    <scope>NUCLEOTIDE SEQUENCE [LARGE SCALE MRNA]</scope>
    <source>
        <tissue>Heart</tissue>
    </source>
</reference>
<feature type="signal peptide" evidence="1">
    <location>
        <begin position="1"/>
        <end position="23"/>
    </location>
</feature>
<feature type="chain" id="PRO_0000010916" description="Interleukin-11 receptor subunit alpha">
    <location>
        <begin position="24"/>
        <end position="431"/>
    </location>
</feature>
<feature type="chain" id="PRO_0000450691" description="Soluble interleukin-11 receptor subunit alpha">
    <location>
        <begin position="24"/>
        <end status="unknown"/>
    </location>
</feature>
<feature type="topological domain" description="Extracellular" evidence="3">
    <location>
        <begin position="24"/>
        <end position="371"/>
    </location>
</feature>
<feature type="transmembrane region" description="Helical" evidence="3">
    <location>
        <begin position="372"/>
        <end position="392"/>
    </location>
</feature>
<feature type="topological domain" description="Cytoplasmic" evidence="3">
    <location>
        <begin position="393"/>
        <end position="431"/>
    </location>
</feature>
<feature type="domain" description="Ig-like C2-type">
    <location>
        <begin position="27"/>
        <end position="110"/>
    </location>
</feature>
<feature type="domain" description="Fibronectin type-III 1" evidence="5">
    <location>
        <begin position="112"/>
        <end position="219"/>
    </location>
</feature>
<feature type="domain" description="Fibronectin type-III 2" evidence="5">
    <location>
        <begin position="220"/>
        <end position="317"/>
    </location>
</feature>
<feature type="region of interest" description="Disordered" evidence="6">
    <location>
        <begin position="151"/>
        <end position="170"/>
    </location>
</feature>
<feature type="region of interest" description="Disordered" evidence="6">
    <location>
        <begin position="310"/>
        <end position="360"/>
    </location>
</feature>
<feature type="region of interest" description="Disordered" evidence="6">
    <location>
        <begin position="402"/>
        <end position="431"/>
    </location>
</feature>
<feature type="short sequence motif" description="WSXWS motif">
    <location>
        <begin position="304"/>
        <end position="308"/>
    </location>
</feature>
<feature type="compositionally biased region" description="Basic and acidic residues" evidence="6">
    <location>
        <begin position="320"/>
        <end position="335"/>
    </location>
</feature>
<feature type="compositionally biased region" description="Pro residues" evidence="6">
    <location>
        <begin position="344"/>
        <end position="355"/>
    </location>
</feature>
<feature type="glycosylation site" description="N-linked (GlcNAc...) asparagine" evidence="3">
    <location>
        <position position="127"/>
    </location>
</feature>
<feature type="glycosylation site" description="N-linked (GlcNAc...) asparagine" evidence="3">
    <location>
        <position position="194"/>
    </location>
</feature>
<feature type="disulfide bond" evidence="4">
    <location>
        <begin position="48"/>
        <end position="94"/>
    </location>
</feature>
<feature type="disulfide bond" evidence="4">
    <location>
        <begin position="120"/>
        <end position="130"/>
    </location>
</feature>
<feature type="disulfide bond" evidence="4">
    <location>
        <begin position="170"/>
        <end position="180"/>
    </location>
</feature>
<protein>
    <recommendedName>
        <fullName evidence="7">Interleukin-11 receptor subunit alpha</fullName>
        <shortName>IL-11 receptor subunit alpha</shortName>
        <shortName>IL-11R subunit alpha</shortName>
        <shortName>IL-11R-alpha</shortName>
        <shortName>IL-11RA</shortName>
    </recommendedName>
    <component>
        <recommendedName>
            <fullName evidence="7">Soluble interleukin-11 receptor subunit alpha</fullName>
            <shortName>sIL-11R</shortName>
            <shortName>sIL-11RA</shortName>
            <shortName evidence="7">sIL11RA</shortName>
        </recommendedName>
    </component>
</protein>
<organism>
    <name type="scientific">Rattus norvegicus</name>
    <name type="common">Rat</name>
    <dbReference type="NCBI Taxonomy" id="10116"/>
    <lineage>
        <taxon>Eukaryota</taxon>
        <taxon>Metazoa</taxon>
        <taxon>Chordata</taxon>
        <taxon>Craniata</taxon>
        <taxon>Vertebrata</taxon>
        <taxon>Euteleostomi</taxon>
        <taxon>Mammalia</taxon>
        <taxon>Eutheria</taxon>
        <taxon>Euarchontoglires</taxon>
        <taxon>Glires</taxon>
        <taxon>Rodentia</taxon>
        <taxon>Myomorpha</taxon>
        <taxon>Muroidea</taxon>
        <taxon>Muridae</taxon>
        <taxon>Murinae</taxon>
        <taxon>Rattus</taxon>
    </lineage>
</organism>
<accession>Q99MF4</accession>
<dbReference type="EMBL" id="AF347936">
    <property type="protein sequence ID" value="AAK29624.1"/>
    <property type="molecule type" value="mRNA"/>
</dbReference>
<dbReference type="EMBL" id="BC070921">
    <property type="protein sequence ID" value="AAH70921.1"/>
    <property type="molecule type" value="mRNA"/>
</dbReference>
<dbReference type="RefSeq" id="NP_001421487.1">
    <property type="nucleotide sequence ID" value="NM_001434558.1"/>
</dbReference>
<dbReference type="RefSeq" id="NP_620816.1">
    <property type="nucleotide sequence ID" value="NM_139116.1"/>
</dbReference>
<dbReference type="RefSeq" id="XP_006238085.1">
    <property type="nucleotide sequence ID" value="XM_006238023.3"/>
</dbReference>
<dbReference type="SMR" id="Q99MF4"/>
<dbReference type="FunCoup" id="Q99MF4">
    <property type="interactions" value="202"/>
</dbReference>
<dbReference type="STRING" id="10116.ENSRNOP00000020885"/>
<dbReference type="GlyCosmos" id="Q99MF4">
    <property type="glycosylation" value="2 sites, No reported glycans"/>
</dbReference>
<dbReference type="GlyGen" id="Q99MF4">
    <property type="glycosylation" value="2 sites"/>
</dbReference>
<dbReference type="PhosphoSitePlus" id="Q99MF4"/>
<dbReference type="PaxDb" id="10116-ENSRNOP00000020885"/>
<dbReference type="Ensembl" id="ENSRNOT00000020885.6">
    <property type="protein sequence ID" value="ENSRNOP00000020885.4"/>
    <property type="gene ID" value="ENSRNOG00000015068.6"/>
</dbReference>
<dbReference type="GeneID" id="245983"/>
<dbReference type="KEGG" id="rno:245983"/>
<dbReference type="UCSC" id="RGD:621332">
    <property type="organism name" value="rat"/>
</dbReference>
<dbReference type="AGR" id="RGD:621332"/>
<dbReference type="CTD" id="16157"/>
<dbReference type="RGD" id="621332">
    <property type="gene designation" value="Il11ra1"/>
</dbReference>
<dbReference type="eggNOG" id="ENOG502R7G6">
    <property type="taxonomic scope" value="Eukaryota"/>
</dbReference>
<dbReference type="GeneTree" id="ENSGT00940000160904"/>
<dbReference type="HOGENOM" id="CLU_047259_0_1_1"/>
<dbReference type="InParanoid" id="Q99MF4"/>
<dbReference type="OrthoDB" id="418412at2759"/>
<dbReference type="PhylomeDB" id="Q99MF4"/>
<dbReference type="TreeFam" id="TF331210"/>
<dbReference type="Reactome" id="R-RNO-6788467">
    <property type="pathway name" value="IL-6-type cytokine receptor ligand interactions"/>
</dbReference>
<dbReference type="PRO" id="PR:Q99MF4"/>
<dbReference type="Proteomes" id="UP000002494">
    <property type="component" value="Chromosome 5"/>
</dbReference>
<dbReference type="Bgee" id="ENSRNOG00000015068">
    <property type="expression patterns" value="Expressed in pancreas and 20 other cell types or tissues"/>
</dbReference>
<dbReference type="GO" id="GO:0009897">
    <property type="term" value="C:external side of plasma membrane"/>
    <property type="evidence" value="ECO:0000318"/>
    <property type="project" value="GO_Central"/>
</dbReference>
<dbReference type="GO" id="GO:0005576">
    <property type="term" value="C:extracellular region"/>
    <property type="evidence" value="ECO:0007669"/>
    <property type="project" value="UniProtKB-SubCell"/>
</dbReference>
<dbReference type="GO" id="GO:0043235">
    <property type="term" value="C:receptor complex"/>
    <property type="evidence" value="ECO:0000318"/>
    <property type="project" value="GO_Central"/>
</dbReference>
<dbReference type="GO" id="GO:0019970">
    <property type="term" value="F:interleukin-11 binding"/>
    <property type="evidence" value="ECO:0000266"/>
    <property type="project" value="RGD"/>
</dbReference>
<dbReference type="GO" id="GO:0004921">
    <property type="term" value="F:interleukin-11 receptor activity"/>
    <property type="evidence" value="ECO:0000266"/>
    <property type="project" value="RGD"/>
</dbReference>
<dbReference type="GO" id="GO:0044877">
    <property type="term" value="F:protein-containing complex binding"/>
    <property type="evidence" value="ECO:0000304"/>
    <property type="project" value="RGD"/>
</dbReference>
<dbReference type="GO" id="GO:0008283">
    <property type="term" value="P:cell population proliferation"/>
    <property type="evidence" value="ECO:0000266"/>
    <property type="project" value="RGD"/>
</dbReference>
<dbReference type="GO" id="GO:0019221">
    <property type="term" value="P:cytokine-mediated signaling pathway"/>
    <property type="evidence" value="ECO:0000266"/>
    <property type="project" value="RGD"/>
</dbReference>
<dbReference type="GO" id="GO:0046697">
    <property type="term" value="P:decidualization"/>
    <property type="evidence" value="ECO:0000266"/>
    <property type="project" value="RGD"/>
</dbReference>
<dbReference type="GO" id="GO:0032502">
    <property type="term" value="P:developmental process"/>
    <property type="evidence" value="ECO:0000266"/>
    <property type="project" value="RGD"/>
</dbReference>
<dbReference type="GO" id="GO:0007566">
    <property type="term" value="P:embryo implantation"/>
    <property type="evidence" value="ECO:0000315"/>
    <property type="project" value="RGD"/>
</dbReference>
<dbReference type="GO" id="GO:0060322">
    <property type="term" value="P:head development"/>
    <property type="evidence" value="ECO:0000266"/>
    <property type="project" value="RGD"/>
</dbReference>
<dbReference type="GO" id="GO:0038154">
    <property type="term" value="P:interleukin-11-mediated signaling pathway"/>
    <property type="evidence" value="ECO:0000266"/>
    <property type="project" value="RGD"/>
</dbReference>
<dbReference type="GO" id="GO:0060135">
    <property type="term" value="P:maternal process involved in female pregnancy"/>
    <property type="evidence" value="ECO:0000266"/>
    <property type="project" value="RGD"/>
</dbReference>
<dbReference type="GO" id="GO:0001779">
    <property type="term" value="P:natural killer cell differentiation"/>
    <property type="evidence" value="ECO:0000266"/>
    <property type="project" value="RGD"/>
</dbReference>
<dbReference type="GO" id="GO:0001890">
    <property type="term" value="P:placenta development"/>
    <property type="evidence" value="ECO:0000266"/>
    <property type="project" value="RGD"/>
</dbReference>
<dbReference type="GO" id="GO:0008284">
    <property type="term" value="P:positive regulation of cell population proliferation"/>
    <property type="evidence" value="ECO:0000266"/>
    <property type="project" value="RGD"/>
</dbReference>
<dbReference type="CDD" id="cd00063">
    <property type="entry name" value="FN3"/>
    <property type="match status" value="1"/>
</dbReference>
<dbReference type="FunFam" id="2.60.40.10:FF:000136">
    <property type="entry name" value="Ciliary neurotrophic factor receptor alpha"/>
    <property type="match status" value="1"/>
</dbReference>
<dbReference type="FunFam" id="2.60.40.10:FF:000545">
    <property type="entry name" value="Interleukin-11 receptor subunit alpha"/>
    <property type="match status" value="1"/>
</dbReference>
<dbReference type="Gene3D" id="2.60.40.10">
    <property type="entry name" value="Immunoglobulins"/>
    <property type="match status" value="3"/>
</dbReference>
<dbReference type="InterPro" id="IPR003961">
    <property type="entry name" value="FN3_dom"/>
</dbReference>
<dbReference type="InterPro" id="IPR036116">
    <property type="entry name" value="FN3_sf"/>
</dbReference>
<dbReference type="InterPro" id="IPR003530">
    <property type="entry name" value="Hematopoietin_rcpt_L_F3_CS"/>
</dbReference>
<dbReference type="InterPro" id="IPR007110">
    <property type="entry name" value="Ig-like_dom"/>
</dbReference>
<dbReference type="InterPro" id="IPR036179">
    <property type="entry name" value="Ig-like_dom_sf"/>
</dbReference>
<dbReference type="InterPro" id="IPR013783">
    <property type="entry name" value="Ig-like_fold"/>
</dbReference>
<dbReference type="InterPro" id="IPR003599">
    <property type="entry name" value="Ig_sub"/>
</dbReference>
<dbReference type="InterPro" id="IPR053073">
    <property type="entry name" value="IL11/IL27_subunit_beta"/>
</dbReference>
<dbReference type="PANTHER" id="PTHR48483">
    <property type="entry name" value="INTERLEUKIN-27 SUBUNIT BETA"/>
    <property type="match status" value="1"/>
</dbReference>
<dbReference type="PANTHER" id="PTHR48483:SF2">
    <property type="entry name" value="INTERLEUKIN-27 SUBUNIT BETA"/>
    <property type="match status" value="1"/>
</dbReference>
<dbReference type="SMART" id="SM00060">
    <property type="entry name" value="FN3"/>
    <property type="match status" value="2"/>
</dbReference>
<dbReference type="SMART" id="SM00409">
    <property type="entry name" value="IG"/>
    <property type="match status" value="1"/>
</dbReference>
<dbReference type="SUPFAM" id="SSF49265">
    <property type="entry name" value="Fibronectin type III"/>
    <property type="match status" value="2"/>
</dbReference>
<dbReference type="SUPFAM" id="SSF48726">
    <property type="entry name" value="Immunoglobulin"/>
    <property type="match status" value="1"/>
</dbReference>
<dbReference type="PROSITE" id="PS50853">
    <property type="entry name" value="FN3"/>
    <property type="match status" value="2"/>
</dbReference>
<dbReference type="PROSITE" id="PS01354">
    <property type="entry name" value="HEMATOPO_REC_L_F3"/>
    <property type="match status" value="1"/>
</dbReference>
<dbReference type="PROSITE" id="PS50835">
    <property type="entry name" value="IG_LIKE"/>
    <property type="match status" value="1"/>
</dbReference>
<comment type="function">
    <text evidence="2">Receptor for interleukin-11 (IL11). The receptor systems for IL6, LIF, OSM, CNTF, IL11 and CT1 can utilize IL6ST for initiating signal transmission. The IL11/IL11RA/IL6ST complex may be involved in the control of proliferation and/or differentiation of skeletogenic progenitor or other mesenchymal cells. Essential for the normal development of craniofacial bones and teeth. Restricts suture fusion and tooth number.</text>
</comment>
<comment type="function">
    <molecule>Soluble interleukin-11 receptor subunit alpha</molecule>
    <text evidence="2">Soluble form of IL11 receptor (sIL11RA) that acts as an agonist of IL11 activity. The IL11:sIL11RA complex binds to IL6ST/gp130 on cell surfaces and induces signaling also on cells that do not express membrane-bound IL11RA in a process called IL11 trans-signaling.</text>
</comment>
<comment type="subunit">
    <text evidence="2">On IL11 binding, forms a multimer complex with IL6ST/gp130.</text>
</comment>
<comment type="subcellular location">
    <molecule>Interleukin-11 receptor subunit alpha</molecule>
    <subcellularLocation>
        <location evidence="2">Membrane</location>
        <topology evidence="3">Single-pass type I membrane protein</topology>
    </subcellularLocation>
</comment>
<comment type="subcellular location">
    <molecule>Soluble interleukin-11 receptor subunit alpha</molecule>
    <subcellularLocation>
        <location evidence="2">Secreted</location>
    </subcellularLocation>
</comment>
<comment type="PTM">
    <text evidence="2">A short soluble form is also released from the membrane by proteolysis. The sIL11RA is formed either by limited proteolysis of membrane-bound receptors, a process referred to as ectodomain shedding, or directly secreted from the cells after alternative mRNA splicing. mIL11RA is cleaved by the proteases ADAM10, ELANE and PRTN3.</text>
</comment>
<comment type="similarity">
    <text evidence="7">Belongs to the type I cytokine receptor family. Type 3 subfamily.</text>
</comment>
<evidence type="ECO:0000250" key="1"/>
<evidence type="ECO:0000250" key="2">
    <source>
        <dbReference type="UniProtKB" id="Q14626"/>
    </source>
</evidence>
<evidence type="ECO:0000255" key="3"/>
<evidence type="ECO:0000255" key="4">
    <source>
        <dbReference type="PROSITE-ProRule" id="PRU00114"/>
    </source>
</evidence>
<evidence type="ECO:0000255" key="5">
    <source>
        <dbReference type="PROSITE-ProRule" id="PRU00316"/>
    </source>
</evidence>
<evidence type="ECO:0000256" key="6">
    <source>
        <dbReference type="SAM" id="MobiDB-lite"/>
    </source>
</evidence>
<evidence type="ECO:0000305" key="7"/>
<evidence type="ECO:0000312" key="8">
    <source>
        <dbReference type="RGD" id="621332"/>
    </source>
</evidence>